<gene>
    <name evidence="1" type="primary">pckG</name>
    <name type="synonym">pckA</name>
    <name type="ordered locus">TP_0122</name>
</gene>
<sequence>MELHEIAHARAKAWIEEMVALCAPDTVYVCDGSKKEYDTIMQKMVDAGLATPLKKRKNCFLFRSQPSDVARVEARTFIASKREDDAGPTNHWTDPAELKKTMTGLYSQCMKGRTMYVIPFSMGPVGSPISKNGIEITDSEYVVCNMHIMTRVGTRVLEALGTDGEFVPCLHSVGKPLGPGVTDAGQWPCADMERKYISHFPEERLVWSFGSGYGGNALLGKKCFALRIASVLARDEGWLAEHMLILKITNPAGKTKYIGAAFPSACGKTNLAMMIPTLPGWKVETVGDDIAWMKFGKDGRLYAINPEAGFFGVAPGTSDFSNKNAMDSIKENAIFTNCGLTEDGDVWWEGIGYPAKGTIIDWHGVSRPAPTRDKSPKGEEIAHPNARFTAPARQCPAIASNWEDPEGVPIDAFLFGGRRPSTVPLVHQARDWNHGVFLGSIIGSEVTAAVISDQVGQIRRDPFAMLPFCGYHMADYFSHWIKLGSQARAENLPKIFCVNWFRKDAEGNFLWPGYGDNSRVLAWIFDRCDGVDNAVETAIGWMPKEGALNTEGLNVSTQAVKELLSVDIAGWKKEIKDIRENHYPKFGARLPQQLRDALEVLEARINGSEGAACTRDMC</sequence>
<keyword id="KW-0963">Cytoplasm</keyword>
<keyword id="KW-0210">Decarboxylase</keyword>
<keyword id="KW-0312">Gluconeogenesis</keyword>
<keyword id="KW-0342">GTP-binding</keyword>
<keyword id="KW-0456">Lyase</keyword>
<keyword id="KW-0464">Manganese</keyword>
<keyword id="KW-0479">Metal-binding</keyword>
<keyword id="KW-0547">Nucleotide-binding</keyword>
<keyword id="KW-1185">Reference proteome</keyword>
<feature type="chain" id="PRO_0000103616" description="Phosphoenolpyruvate carboxykinase [GTP]">
    <location>
        <begin position="1"/>
        <end position="618"/>
    </location>
</feature>
<feature type="active site" evidence="1">
    <location>
        <position position="266"/>
    </location>
</feature>
<feature type="binding site" evidence="1">
    <location>
        <position position="71"/>
    </location>
    <ligand>
        <name>substrate</name>
    </ligand>
</feature>
<feature type="binding site" evidence="1">
    <location>
        <begin position="213"/>
        <end position="215"/>
    </location>
    <ligand>
        <name>substrate</name>
    </ligand>
</feature>
<feature type="binding site" evidence="1">
    <location>
        <position position="222"/>
    </location>
    <ligand>
        <name>Mn(2+)</name>
        <dbReference type="ChEBI" id="CHEBI:29035"/>
    </ligand>
</feature>
<feature type="binding site" evidence="1">
    <location>
        <position position="242"/>
    </location>
    <ligand>
        <name>Mn(2+)</name>
        <dbReference type="ChEBI" id="CHEBI:29035"/>
    </ligand>
</feature>
<feature type="binding site" evidence="1">
    <location>
        <position position="264"/>
    </location>
    <ligand>
        <name>substrate</name>
    </ligand>
</feature>
<feature type="binding site" evidence="1">
    <location>
        <begin position="265"/>
        <end position="270"/>
    </location>
    <ligand>
        <name>GTP</name>
        <dbReference type="ChEBI" id="CHEBI:37565"/>
    </ligand>
</feature>
<feature type="binding site" evidence="1">
    <location>
        <position position="289"/>
    </location>
    <ligand>
        <name>Mn(2+)</name>
        <dbReference type="ChEBI" id="CHEBI:29035"/>
    </ligand>
</feature>
<feature type="binding site" evidence="1">
    <location>
        <begin position="385"/>
        <end position="387"/>
    </location>
    <ligand>
        <name>substrate</name>
    </ligand>
</feature>
<feature type="binding site" evidence="1">
    <location>
        <position position="387"/>
    </location>
    <ligand>
        <name>GTP</name>
        <dbReference type="ChEBI" id="CHEBI:37565"/>
    </ligand>
</feature>
<feature type="binding site" evidence="1">
    <location>
        <position position="418"/>
    </location>
    <ligand>
        <name>GTP</name>
        <dbReference type="ChEBI" id="CHEBI:37565"/>
    </ligand>
</feature>
<feature type="binding site" evidence="1">
    <location>
        <begin position="514"/>
        <end position="517"/>
    </location>
    <ligand>
        <name>GTP</name>
        <dbReference type="ChEBI" id="CHEBI:37565"/>
    </ligand>
</feature>
<name>PCKG_TREPA</name>
<dbReference type="EC" id="4.1.1.32" evidence="1"/>
<dbReference type="EMBL" id="AE000520">
    <property type="protein sequence ID" value="AAC65112.1"/>
    <property type="molecule type" value="Genomic_DNA"/>
</dbReference>
<dbReference type="PIR" id="A71364">
    <property type="entry name" value="A71364"/>
</dbReference>
<dbReference type="RefSeq" id="WP_010881571.1">
    <property type="nucleotide sequence ID" value="NC_021490.2"/>
</dbReference>
<dbReference type="SMR" id="O83159"/>
<dbReference type="STRING" id="243276.TP_0122"/>
<dbReference type="EnsemblBacteria" id="AAC65112">
    <property type="protein sequence ID" value="AAC65112"/>
    <property type="gene ID" value="TP_0122"/>
</dbReference>
<dbReference type="KEGG" id="tpa:TP_0122"/>
<dbReference type="KEGG" id="tpw:TPANIC_0122"/>
<dbReference type="eggNOG" id="COG1274">
    <property type="taxonomic scope" value="Bacteria"/>
</dbReference>
<dbReference type="HOGENOM" id="CLU_028872_1_1_12"/>
<dbReference type="OrthoDB" id="9758871at2"/>
<dbReference type="UniPathway" id="UPA00138"/>
<dbReference type="Proteomes" id="UP000000811">
    <property type="component" value="Chromosome"/>
</dbReference>
<dbReference type="GO" id="GO:0005829">
    <property type="term" value="C:cytosol"/>
    <property type="evidence" value="ECO:0007669"/>
    <property type="project" value="TreeGrafter"/>
</dbReference>
<dbReference type="GO" id="GO:0005525">
    <property type="term" value="F:GTP binding"/>
    <property type="evidence" value="ECO:0007669"/>
    <property type="project" value="UniProtKB-UniRule"/>
</dbReference>
<dbReference type="GO" id="GO:0030145">
    <property type="term" value="F:manganese ion binding"/>
    <property type="evidence" value="ECO:0007669"/>
    <property type="project" value="UniProtKB-UniRule"/>
</dbReference>
<dbReference type="GO" id="GO:0004613">
    <property type="term" value="F:phosphoenolpyruvate carboxykinase (GTP) activity"/>
    <property type="evidence" value="ECO:0007669"/>
    <property type="project" value="UniProtKB-UniRule"/>
</dbReference>
<dbReference type="GO" id="GO:0071333">
    <property type="term" value="P:cellular response to glucose stimulus"/>
    <property type="evidence" value="ECO:0007669"/>
    <property type="project" value="TreeGrafter"/>
</dbReference>
<dbReference type="GO" id="GO:0006094">
    <property type="term" value="P:gluconeogenesis"/>
    <property type="evidence" value="ECO:0007669"/>
    <property type="project" value="UniProtKB-UniRule"/>
</dbReference>
<dbReference type="GO" id="GO:0046327">
    <property type="term" value="P:glycerol biosynthetic process from pyruvate"/>
    <property type="evidence" value="ECO:0007669"/>
    <property type="project" value="TreeGrafter"/>
</dbReference>
<dbReference type="GO" id="GO:0006107">
    <property type="term" value="P:oxaloacetate metabolic process"/>
    <property type="evidence" value="ECO:0007669"/>
    <property type="project" value="TreeGrafter"/>
</dbReference>
<dbReference type="GO" id="GO:0019543">
    <property type="term" value="P:propionate catabolic process"/>
    <property type="evidence" value="ECO:0007669"/>
    <property type="project" value="TreeGrafter"/>
</dbReference>
<dbReference type="GO" id="GO:0033993">
    <property type="term" value="P:response to lipid"/>
    <property type="evidence" value="ECO:0007669"/>
    <property type="project" value="TreeGrafter"/>
</dbReference>
<dbReference type="GO" id="GO:0042594">
    <property type="term" value="P:response to starvation"/>
    <property type="evidence" value="ECO:0007669"/>
    <property type="project" value="TreeGrafter"/>
</dbReference>
<dbReference type="CDD" id="cd00819">
    <property type="entry name" value="PEPCK_GTP"/>
    <property type="match status" value="1"/>
</dbReference>
<dbReference type="FunFam" id="3.40.449.10:FF:000005">
    <property type="entry name" value="Phosphoenolpyruvate carboxykinase [GTP]"/>
    <property type="match status" value="1"/>
</dbReference>
<dbReference type="Gene3D" id="3.90.228.20">
    <property type="match status" value="1"/>
</dbReference>
<dbReference type="Gene3D" id="3.40.449.10">
    <property type="entry name" value="Phosphoenolpyruvate Carboxykinase, domain 1"/>
    <property type="match status" value="1"/>
</dbReference>
<dbReference type="Gene3D" id="2.170.8.10">
    <property type="entry name" value="Phosphoenolpyruvate Carboxykinase, domain 2"/>
    <property type="match status" value="1"/>
</dbReference>
<dbReference type="HAMAP" id="MF_00452">
    <property type="entry name" value="PEPCK_GTP"/>
    <property type="match status" value="1"/>
</dbReference>
<dbReference type="InterPro" id="IPR018091">
    <property type="entry name" value="PEP_carboxykin_GTP_CS"/>
</dbReference>
<dbReference type="InterPro" id="IPR013035">
    <property type="entry name" value="PEP_carboxykinase_C"/>
</dbReference>
<dbReference type="InterPro" id="IPR008209">
    <property type="entry name" value="PEP_carboxykinase_GTP"/>
</dbReference>
<dbReference type="InterPro" id="IPR035077">
    <property type="entry name" value="PEP_carboxykinase_GTP_C"/>
</dbReference>
<dbReference type="InterPro" id="IPR035078">
    <property type="entry name" value="PEP_carboxykinase_GTP_N"/>
</dbReference>
<dbReference type="InterPro" id="IPR008210">
    <property type="entry name" value="PEP_carboxykinase_N"/>
</dbReference>
<dbReference type="NCBIfam" id="NF003253">
    <property type="entry name" value="PRK04210.1"/>
    <property type="match status" value="1"/>
</dbReference>
<dbReference type="PANTHER" id="PTHR11561">
    <property type="entry name" value="PHOSPHOENOLPYRUVATE CARBOXYKINASE"/>
    <property type="match status" value="1"/>
</dbReference>
<dbReference type="PANTHER" id="PTHR11561:SF0">
    <property type="entry name" value="PHOSPHOENOLPYRUVATE CARBOXYKINASE [GTP]-RELATED"/>
    <property type="match status" value="1"/>
</dbReference>
<dbReference type="Pfam" id="PF00821">
    <property type="entry name" value="PEPCK_GTP"/>
    <property type="match status" value="1"/>
</dbReference>
<dbReference type="Pfam" id="PF17297">
    <property type="entry name" value="PEPCK_N"/>
    <property type="match status" value="1"/>
</dbReference>
<dbReference type="PIRSF" id="PIRSF001348">
    <property type="entry name" value="PEP_carboxykinase_GTP"/>
    <property type="match status" value="1"/>
</dbReference>
<dbReference type="SUPFAM" id="SSF68923">
    <property type="entry name" value="PEP carboxykinase N-terminal domain"/>
    <property type="match status" value="1"/>
</dbReference>
<dbReference type="SUPFAM" id="SSF53795">
    <property type="entry name" value="PEP carboxykinase-like"/>
    <property type="match status" value="1"/>
</dbReference>
<dbReference type="PROSITE" id="PS00505">
    <property type="entry name" value="PEPCK_GTP"/>
    <property type="match status" value="1"/>
</dbReference>
<proteinExistence type="inferred from homology"/>
<comment type="function">
    <text evidence="1">Catalyzes the conversion of oxaloacetate (OAA) to phosphoenolpyruvate (PEP).</text>
</comment>
<comment type="catalytic activity">
    <reaction evidence="1">
        <text>oxaloacetate + GTP = phosphoenolpyruvate + GDP + CO2</text>
        <dbReference type="Rhea" id="RHEA:10388"/>
        <dbReference type="ChEBI" id="CHEBI:16452"/>
        <dbReference type="ChEBI" id="CHEBI:16526"/>
        <dbReference type="ChEBI" id="CHEBI:37565"/>
        <dbReference type="ChEBI" id="CHEBI:58189"/>
        <dbReference type="ChEBI" id="CHEBI:58702"/>
        <dbReference type="EC" id="4.1.1.32"/>
    </reaction>
</comment>
<comment type="cofactor">
    <cofactor evidence="1">
        <name>Mn(2+)</name>
        <dbReference type="ChEBI" id="CHEBI:29035"/>
    </cofactor>
    <text evidence="1">Binds 1 Mn(2+) ion per subunit.</text>
</comment>
<comment type="pathway">
    <text evidence="1">Carbohydrate biosynthesis; gluconeogenesis.</text>
</comment>
<comment type="subunit">
    <text evidence="1">Monomer.</text>
</comment>
<comment type="subcellular location">
    <subcellularLocation>
        <location evidence="1">Cytoplasm</location>
    </subcellularLocation>
</comment>
<comment type="similarity">
    <text evidence="1">Belongs to the phosphoenolpyruvate carboxykinase [GTP] family.</text>
</comment>
<organism>
    <name type="scientific">Treponema pallidum (strain Nichols)</name>
    <dbReference type="NCBI Taxonomy" id="243276"/>
    <lineage>
        <taxon>Bacteria</taxon>
        <taxon>Pseudomonadati</taxon>
        <taxon>Spirochaetota</taxon>
        <taxon>Spirochaetia</taxon>
        <taxon>Spirochaetales</taxon>
        <taxon>Treponemataceae</taxon>
        <taxon>Treponema</taxon>
    </lineage>
</organism>
<protein>
    <recommendedName>
        <fullName evidence="1">Phosphoenolpyruvate carboxykinase [GTP]</fullName>
        <shortName evidence="1">PEP carboxykinase</shortName>
        <shortName evidence="1">PEPCK</shortName>
        <ecNumber evidence="1">4.1.1.32</ecNumber>
    </recommendedName>
    <alternativeName>
        <fullName evidence="1">GTP-dependent phosphoenolpyruvate carboxykinase</fullName>
        <shortName evidence="1">GTP-PEPCK</shortName>
    </alternativeName>
</protein>
<evidence type="ECO:0000255" key="1">
    <source>
        <dbReference type="HAMAP-Rule" id="MF_00452"/>
    </source>
</evidence>
<reference key="1">
    <citation type="journal article" date="1998" name="Science">
        <title>Complete genome sequence of Treponema pallidum, the syphilis spirochete.</title>
        <authorList>
            <person name="Fraser C.M."/>
            <person name="Norris S.J."/>
            <person name="Weinstock G.M."/>
            <person name="White O."/>
            <person name="Sutton G.G."/>
            <person name="Dodson R.J."/>
            <person name="Gwinn M.L."/>
            <person name="Hickey E.K."/>
            <person name="Clayton R.A."/>
            <person name="Ketchum K.A."/>
            <person name="Sodergren E."/>
            <person name="Hardham J.M."/>
            <person name="McLeod M.P."/>
            <person name="Salzberg S.L."/>
            <person name="Peterson J.D."/>
            <person name="Khalak H.G."/>
            <person name="Richardson D.L."/>
            <person name="Howell J.K."/>
            <person name="Chidambaram M."/>
            <person name="Utterback T.R."/>
            <person name="McDonald L.A."/>
            <person name="Artiach P."/>
            <person name="Bowman C."/>
            <person name="Cotton M.D."/>
            <person name="Fujii C."/>
            <person name="Garland S.A."/>
            <person name="Hatch B."/>
            <person name="Horst K."/>
            <person name="Roberts K.M."/>
            <person name="Sandusky M."/>
            <person name="Weidman J.F."/>
            <person name="Smith H.O."/>
            <person name="Venter J.C."/>
        </authorList>
    </citation>
    <scope>NUCLEOTIDE SEQUENCE [LARGE SCALE GENOMIC DNA]</scope>
    <source>
        <strain>Nichols</strain>
    </source>
</reference>
<accession>O83159</accession>